<comment type="function">
    <text evidence="1">Catalyzes the irreversible transfer of a propylamine group from the amino donor S-adenosylmethioninamine (decarboxy-AdoMet) to putrescine (1,4-diaminobutane) to yield spermidine.</text>
</comment>
<comment type="catalytic activity">
    <reaction evidence="1">
        <text>S-adenosyl 3-(methylsulfanyl)propylamine + putrescine = S-methyl-5'-thioadenosine + spermidine + H(+)</text>
        <dbReference type="Rhea" id="RHEA:12721"/>
        <dbReference type="ChEBI" id="CHEBI:15378"/>
        <dbReference type="ChEBI" id="CHEBI:17509"/>
        <dbReference type="ChEBI" id="CHEBI:57443"/>
        <dbReference type="ChEBI" id="CHEBI:57834"/>
        <dbReference type="ChEBI" id="CHEBI:326268"/>
        <dbReference type="EC" id="2.5.1.16"/>
    </reaction>
</comment>
<comment type="pathway">
    <text evidence="1">Amine and polyamine biosynthesis; spermidine biosynthesis; spermidine from putrescine: step 1/1.</text>
</comment>
<comment type="subunit">
    <text evidence="1">Homodimer or homotetramer.</text>
</comment>
<comment type="subcellular location">
    <subcellularLocation>
        <location evidence="1">Cytoplasm</location>
    </subcellularLocation>
</comment>
<comment type="similarity">
    <text evidence="1">Belongs to the spermidine/spermine synthase family.</text>
</comment>
<dbReference type="EC" id="2.5.1.16" evidence="1"/>
<dbReference type="EMBL" id="CP001158">
    <property type="protein sequence ID" value="ACL30028.1"/>
    <property type="molecule type" value="Genomic_DNA"/>
</dbReference>
<dbReference type="RefSeq" id="WP_009874167.1">
    <property type="nucleotide sequence ID" value="NC_011834.1"/>
</dbReference>
<dbReference type="SMR" id="B8D7B3"/>
<dbReference type="KEGG" id="bau:BUAPTUC7_208"/>
<dbReference type="HOGENOM" id="CLU_048199_1_0_6"/>
<dbReference type="UniPathway" id="UPA00248">
    <property type="reaction ID" value="UER00314"/>
</dbReference>
<dbReference type="GO" id="GO:0005829">
    <property type="term" value="C:cytosol"/>
    <property type="evidence" value="ECO:0007669"/>
    <property type="project" value="TreeGrafter"/>
</dbReference>
<dbReference type="GO" id="GO:0004766">
    <property type="term" value="F:spermidine synthase activity"/>
    <property type="evidence" value="ECO:0007669"/>
    <property type="project" value="UniProtKB-UniRule"/>
</dbReference>
<dbReference type="GO" id="GO:0008295">
    <property type="term" value="P:spermidine biosynthetic process"/>
    <property type="evidence" value="ECO:0007669"/>
    <property type="project" value="UniProtKB-UniRule"/>
</dbReference>
<dbReference type="CDD" id="cd02440">
    <property type="entry name" value="AdoMet_MTases"/>
    <property type="match status" value="1"/>
</dbReference>
<dbReference type="Gene3D" id="2.30.140.10">
    <property type="entry name" value="Spermidine synthase, tetramerisation domain"/>
    <property type="match status" value="1"/>
</dbReference>
<dbReference type="Gene3D" id="3.40.50.150">
    <property type="entry name" value="Vaccinia Virus protein VP39"/>
    <property type="match status" value="1"/>
</dbReference>
<dbReference type="HAMAP" id="MF_00198">
    <property type="entry name" value="Spermidine_synth"/>
    <property type="match status" value="1"/>
</dbReference>
<dbReference type="InterPro" id="IPR030374">
    <property type="entry name" value="PABS"/>
</dbReference>
<dbReference type="InterPro" id="IPR030373">
    <property type="entry name" value="PABS_CS"/>
</dbReference>
<dbReference type="InterPro" id="IPR029063">
    <property type="entry name" value="SAM-dependent_MTases_sf"/>
</dbReference>
<dbReference type="InterPro" id="IPR001045">
    <property type="entry name" value="Spermi_synthase"/>
</dbReference>
<dbReference type="InterPro" id="IPR035246">
    <property type="entry name" value="Spermidine_synt_N"/>
</dbReference>
<dbReference type="InterPro" id="IPR037163">
    <property type="entry name" value="Spermidine_synt_N_sf"/>
</dbReference>
<dbReference type="NCBIfam" id="NF002010">
    <property type="entry name" value="PRK00811.1"/>
    <property type="match status" value="1"/>
</dbReference>
<dbReference type="NCBIfam" id="TIGR00417">
    <property type="entry name" value="speE"/>
    <property type="match status" value="1"/>
</dbReference>
<dbReference type="PANTHER" id="PTHR11558:SF11">
    <property type="entry name" value="SPERMIDINE SYNTHASE"/>
    <property type="match status" value="1"/>
</dbReference>
<dbReference type="PANTHER" id="PTHR11558">
    <property type="entry name" value="SPERMIDINE/SPERMINE SYNTHASE"/>
    <property type="match status" value="1"/>
</dbReference>
<dbReference type="Pfam" id="PF17284">
    <property type="entry name" value="Spermine_synt_N"/>
    <property type="match status" value="1"/>
</dbReference>
<dbReference type="Pfam" id="PF01564">
    <property type="entry name" value="Spermine_synth"/>
    <property type="match status" value="1"/>
</dbReference>
<dbReference type="SUPFAM" id="SSF53335">
    <property type="entry name" value="S-adenosyl-L-methionine-dependent methyltransferases"/>
    <property type="match status" value="1"/>
</dbReference>
<dbReference type="PROSITE" id="PS01330">
    <property type="entry name" value="PABS_1"/>
    <property type="match status" value="1"/>
</dbReference>
<dbReference type="PROSITE" id="PS51006">
    <property type="entry name" value="PABS_2"/>
    <property type="match status" value="1"/>
</dbReference>
<organism>
    <name type="scientific">Buchnera aphidicola subsp. Acyrthosiphon pisum (strain Tuc7)</name>
    <dbReference type="NCBI Taxonomy" id="561501"/>
    <lineage>
        <taxon>Bacteria</taxon>
        <taxon>Pseudomonadati</taxon>
        <taxon>Pseudomonadota</taxon>
        <taxon>Gammaproteobacteria</taxon>
        <taxon>Enterobacterales</taxon>
        <taxon>Erwiniaceae</taxon>
        <taxon>Buchnera</taxon>
    </lineage>
</organism>
<proteinExistence type="inferred from homology"/>
<reference key="1">
    <citation type="journal article" date="2009" name="Science">
        <title>The dynamics and time scale of ongoing genomic erosion in symbiotic bacteria.</title>
        <authorList>
            <person name="Moran N.A."/>
            <person name="McLaughlin H.J."/>
            <person name="Sorek R."/>
        </authorList>
    </citation>
    <scope>NUCLEOTIDE SEQUENCE [LARGE SCALE GENOMIC DNA]</scope>
    <source>
        <strain>Tuc7</strain>
    </source>
</reference>
<feature type="chain" id="PRO_1000124437" description="Polyamine aminopropyltransferase">
    <location>
        <begin position="1"/>
        <end position="286"/>
    </location>
</feature>
<feature type="domain" description="PABS" evidence="1">
    <location>
        <begin position="5"/>
        <end position="238"/>
    </location>
</feature>
<feature type="active site" description="Proton acceptor" evidence="1">
    <location>
        <position position="158"/>
    </location>
</feature>
<feature type="binding site" evidence="1">
    <location>
        <position position="64"/>
    </location>
    <ligand>
        <name>spermidine</name>
        <dbReference type="ChEBI" id="CHEBI:57834"/>
    </ligand>
</feature>
<feature type="binding site" evidence="1">
    <location>
        <position position="88"/>
    </location>
    <ligand>
        <name>spermidine</name>
        <dbReference type="ChEBI" id="CHEBI:57834"/>
    </ligand>
</feature>
<feature type="binding site" evidence="1">
    <location>
        <position position="108"/>
    </location>
    <ligand>
        <name>S-methyl-5'-thioadenosine</name>
        <dbReference type="ChEBI" id="CHEBI:17509"/>
    </ligand>
</feature>
<feature type="binding site" evidence="1">
    <location>
        <begin position="140"/>
        <end position="141"/>
    </location>
    <ligand>
        <name>S-methyl-5'-thioadenosine</name>
        <dbReference type="ChEBI" id="CHEBI:17509"/>
    </ligand>
</feature>
<feature type="binding site" evidence="1">
    <location>
        <begin position="158"/>
        <end position="161"/>
    </location>
    <ligand>
        <name>spermidine</name>
        <dbReference type="ChEBI" id="CHEBI:57834"/>
    </ligand>
</feature>
<accession>B8D7B3</accession>
<gene>
    <name evidence="1" type="primary">speE</name>
    <name type="ordered locus">BUAPTUC7_208</name>
</gene>
<evidence type="ECO:0000255" key="1">
    <source>
        <dbReference type="HAMAP-Rule" id="MF_00198"/>
    </source>
</evidence>
<keyword id="KW-0963">Cytoplasm</keyword>
<keyword id="KW-0620">Polyamine biosynthesis</keyword>
<keyword id="KW-0745">Spermidine biosynthesis</keyword>
<keyword id="KW-0808">Transferase</keyword>
<sequence length="286" mass="33788">MDHKKTWHEKLYCHLGQYFLIEKMLYKKKTPHHQVMIFKNSVFGKIMVIDDIVQTTERDEFIYHEMLTHVPIIAHGSIKSVLIIGGGDGGILREVCRYKMIENITMVEIDVNIIDLCKKYFPNHSNQAYQDSRLNLIIDDGLNFIKRTKEKFDLIISDSTDPIGCGKNLFRSEFYFNCKNHLEENGIFVAQNGVFFLQKNETILTYKNLKKYFYDTRFYQANVPTYYGGVMVFAWGTNNIEYRKNSLEKIQIRIKNTKLDFNYYNAKIHISSFYLPQYILNELNES</sequence>
<protein>
    <recommendedName>
        <fullName evidence="1">Polyamine aminopropyltransferase</fullName>
    </recommendedName>
    <alternativeName>
        <fullName evidence="1">Putrescine aminopropyltransferase</fullName>
        <shortName evidence="1">PAPT</shortName>
    </alternativeName>
    <alternativeName>
        <fullName evidence="1">Spermidine synthase</fullName>
        <shortName evidence="1">SPDS</shortName>
        <shortName evidence="1">SPDSY</shortName>
        <ecNumber evidence="1">2.5.1.16</ecNumber>
    </alternativeName>
</protein>
<name>SPEE_BUCAT</name>